<organism>
    <name type="scientific">Bacillus cereus (strain B4264)</name>
    <dbReference type="NCBI Taxonomy" id="405532"/>
    <lineage>
        <taxon>Bacteria</taxon>
        <taxon>Bacillati</taxon>
        <taxon>Bacillota</taxon>
        <taxon>Bacilli</taxon>
        <taxon>Bacillales</taxon>
        <taxon>Bacillaceae</taxon>
        <taxon>Bacillus</taxon>
        <taxon>Bacillus cereus group</taxon>
    </lineage>
</organism>
<comment type="function">
    <text evidence="1">Regulates transcriptional attenuation of the pyrimidine nucleotide (pyr) operon by binding in a uridine-dependent manner to specific sites on pyr mRNA. This disrupts an antiterminator hairpin in the RNA and favors formation of a downstream transcription terminator, leading to a reduced expression of downstream genes.</text>
</comment>
<comment type="function">
    <text evidence="1">Also displays a weak uracil phosphoribosyltransferase activity which is not physiologically significant.</text>
</comment>
<comment type="catalytic activity">
    <reaction evidence="1">
        <text>UMP + diphosphate = 5-phospho-alpha-D-ribose 1-diphosphate + uracil</text>
        <dbReference type="Rhea" id="RHEA:13017"/>
        <dbReference type="ChEBI" id="CHEBI:17568"/>
        <dbReference type="ChEBI" id="CHEBI:33019"/>
        <dbReference type="ChEBI" id="CHEBI:57865"/>
        <dbReference type="ChEBI" id="CHEBI:58017"/>
        <dbReference type="EC" id="2.4.2.9"/>
    </reaction>
</comment>
<comment type="subunit">
    <text evidence="1">Homodimer and homohexamer; in equilibrium.</text>
</comment>
<comment type="similarity">
    <text evidence="1">Belongs to the purine/pyrimidine phosphoribosyltransferase family. PyrR subfamily.</text>
</comment>
<keyword id="KW-0328">Glycosyltransferase</keyword>
<keyword id="KW-0694">RNA-binding</keyword>
<keyword id="KW-0804">Transcription</keyword>
<keyword id="KW-0805">Transcription regulation</keyword>
<keyword id="KW-0806">Transcription termination</keyword>
<keyword id="KW-0808">Transferase</keyword>
<accession>B7H6M7</accession>
<evidence type="ECO:0000255" key="1">
    <source>
        <dbReference type="HAMAP-Rule" id="MF_01219"/>
    </source>
</evidence>
<gene>
    <name evidence="1" type="primary">pyrR</name>
    <name type="ordered locus">BCB4264_A3991</name>
</gene>
<name>PYRR_BACC4</name>
<reference key="1">
    <citation type="submission" date="2008-10" db="EMBL/GenBank/DDBJ databases">
        <title>Genome sequence of Bacillus cereus B4264.</title>
        <authorList>
            <person name="Dodson R.J."/>
            <person name="Durkin A.S."/>
            <person name="Rosovitz M.J."/>
            <person name="Rasko D.A."/>
            <person name="Hoffmaster A."/>
            <person name="Ravel J."/>
            <person name="Sutton G."/>
        </authorList>
    </citation>
    <scope>NUCLEOTIDE SEQUENCE [LARGE SCALE GENOMIC DNA]</scope>
    <source>
        <strain>B4264</strain>
    </source>
</reference>
<feature type="chain" id="PRO_1000139186" description="Bifunctional protein PyrR">
    <location>
        <begin position="1"/>
        <end position="180"/>
    </location>
</feature>
<feature type="short sequence motif" description="PRPP-binding" evidence="1">
    <location>
        <begin position="101"/>
        <end position="113"/>
    </location>
</feature>
<proteinExistence type="inferred from homology"/>
<dbReference type="EC" id="2.4.2.9" evidence="1"/>
<dbReference type="EMBL" id="CP001176">
    <property type="protein sequence ID" value="ACK64032.1"/>
    <property type="molecule type" value="Genomic_DNA"/>
</dbReference>
<dbReference type="RefSeq" id="WP_001156491.1">
    <property type="nucleotide sequence ID" value="NZ_VEHB01000002.1"/>
</dbReference>
<dbReference type="SMR" id="B7H6M7"/>
<dbReference type="GeneID" id="75087028"/>
<dbReference type="KEGG" id="bcb:BCB4264_A3991"/>
<dbReference type="HOGENOM" id="CLU_094234_2_1_9"/>
<dbReference type="Proteomes" id="UP000007096">
    <property type="component" value="Chromosome"/>
</dbReference>
<dbReference type="GO" id="GO:0003723">
    <property type="term" value="F:RNA binding"/>
    <property type="evidence" value="ECO:0007669"/>
    <property type="project" value="UniProtKB-UniRule"/>
</dbReference>
<dbReference type="GO" id="GO:0004845">
    <property type="term" value="F:uracil phosphoribosyltransferase activity"/>
    <property type="evidence" value="ECO:0007669"/>
    <property type="project" value="UniProtKB-UniRule"/>
</dbReference>
<dbReference type="GO" id="GO:0006353">
    <property type="term" value="P:DNA-templated transcription termination"/>
    <property type="evidence" value="ECO:0007669"/>
    <property type="project" value="UniProtKB-UniRule"/>
</dbReference>
<dbReference type="CDD" id="cd06223">
    <property type="entry name" value="PRTases_typeI"/>
    <property type="match status" value="1"/>
</dbReference>
<dbReference type="FunFam" id="3.40.50.2020:FF:000020">
    <property type="entry name" value="Bifunctional protein PyrR"/>
    <property type="match status" value="1"/>
</dbReference>
<dbReference type="Gene3D" id="3.40.50.2020">
    <property type="match status" value="1"/>
</dbReference>
<dbReference type="HAMAP" id="MF_01219">
    <property type="entry name" value="PyrR"/>
    <property type="match status" value="1"/>
</dbReference>
<dbReference type="InterPro" id="IPR000836">
    <property type="entry name" value="PRibTrfase_dom"/>
</dbReference>
<dbReference type="InterPro" id="IPR029057">
    <property type="entry name" value="PRTase-like"/>
</dbReference>
<dbReference type="InterPro" id="IPR023050">
    <property type="entry name" value="PyrR"/>
</dbReference>
<dbReference type="InterPro" id="IPR050137">
    <property type="entry name" value="PyrR_bifunctional"/>
</dbReference>
<dbReference type="NCBIfam" id="NF003545">
    <property type="entry name" value="PRK05205.1-1"/>
    <property type="match status" value="1"/>
</dbReference>
<dbReference type="NCBIfam" id="NF003547">
    <property type="entry name" value="PRK05205.1-3"/>
    <property type="match status" value="1"/>
</dbReference>
<dbReference type="NCBIfam" id="NF003548">
    <property type="entry name" value="PRK05205.1-4"/>
    <property type="match status" value="1"/>
</dbReference>
<dbReference type="NCBIfam" id="NF003549">
    <property type="entry name" value="PRK05205.1-5"/>
    <property type="match status" value="1"/>
</dbReference>
<dbReference type="PANTHER" id="PTHR11608">
    <property type="entry name" value="BIFUNCTIONAL PROTEIN PYRR"/>
    <property type="match status" value="1"/>
</dbReference>
<dbReference type="PANTHER" id="PTHR11608:SF0">
    <property type="entry name" value="BIFUNCTIONAL PROTEIN PYRR"/>
    <property type="match status" value="1"/>
</dbReference>
<dbReference type="Pfam" id="PF00156">
    <property type="entry name" value="Pribosyltran"/>
    <property type="match status" value="1"/>
</dbReference>
<dbReference type="SUPFAM" id="SSF53271">
    <property type="entry name" value="PRTase-like"/>
    <property type="match status" value="1"/>
</dbReference>
<sequence>MQEKAVVLDDQMIRRALTRISHEIVERNKGVDNCVLVGIKTRGIFIAQRLAERIGQIEGKEMEVGELDITLYRDDLTLQSKNKEPLVKGSDIPVDITKKKVILVDDVLYTGRTVRAAMDALMDLGRPSQIQLAVLVDRGHRELPIRADYVGKNIPTSSEERIEVDLQETDQQDRVSIYDK</sequence>
<protein>
    <recommendedName>
        <fullName evidence="1">Bifunctional protein PyrR</fullName>
    </recommendedName>
    <domain>
        <recommendedName>
            <fullName evidence="1">Pyrimidine operon regulatory protein</fullName>
        </recommendedName>
    </domain>
    <domain>
        <recommendedName>
            <fullName evidence="1">Uracil phosphoribosyltransferase</fullName>
            <shortName evidence="1">UPRTase</shortName>
            <ecNumber evidence="1">2.4.2.9</ecNumber>
        </recommendedName>
    </domain>
</protein>